<keyword id="KW-0067">ATP-binding</keyword>
<keyword id="KW-0315">Glutamine amidotransferase</keyword>
<keyword id="KW-0332">GMP biosynthesis</keyword>
<keyword id="KW-0436">Ligase</keyword>
<keyword id="KW-0547">Nucleotide-binding</keyword>
<keyword id="KW-0658">Purine biosynthesis</keyword>
<keyword id="KW-1185">Reference proteome</keyword>
<gene>
    <name evidence="1" type="primary">guaA</name>
    <name type="ordered locus">azo1581</name>
</gene>
<organism>
    <name type="scientific">Azoarcus sp. (strain BH72)</name>
    <dbReference type="NCBI Taxonomy" id="418699"/>
    <lineage>
        <taxon>Bacteria</taxon>
        <taxon>Pseudomonadati</taxon>
        <taxon>Pseudomonadota</taxon>
        <taxon>Betaproteobacteria</taxon>
        <taxon>Rhodocyclales</taxon>
        <taxon>Zoogloeaceae</taxon>
        <taxon>Azoarcus</taxon>
    </lineage>
</organism>
<name>GUAA_AZOSB</name>
<sequence>MSHQKILILDFGSQVSQLIARRVREQHVYCELHPYDVSEAFIRDFKPQGIILSGGPNSVYEAVDWRAPQVVFELGVPVLGICYGMQTMAEQLGGKVESSAKREFGYAELRARGHSKLFQGIEDRTNAEGHGLLDVWMSHGDKVTELPAGFKVIGSNESCPVAAMADEERGFYGVQFHPEVTHTIKGKEMLARFVHEICGCGNDWNMPDYISEAVEKIRAQVGDEEVILGLSGGVDSSVAAALIHRAIGDQLTCVFVDNGLLRLNEGAQVMETFNRSLGVKVIHVDATEQFMGHLKGVSDPEQKRKIIGREFVEVFQAEAAKLPKARWLAQGTIYPDVIESAGAKTGKAHAIKSHHNVGGLPETLNLKLLEPLRDLFKDEVRELGVALGLPHDMVYRHPFPGPGLGVRILGEVKKEFADLLRRADAIFIDELRAADWYDKTSQAFAVFLPVKSVGVMGDGRTYEYVVALRAVQTQDFMTAHWAELPHSLLGKVSNRIINEVRGINRVVYDISGKPPATIEWE</sequence>
<accession>A1K5U3</accession>
<protein>
    <recommendedName>
        <fullName evidence="1">GMP synthase [glutamine-hydrolyzing]</fullName>
        <ecNumber evidence="1">6.3.5.2</ecNumber>
    </recommendedName>
    <alternativeName>
        <fullName evidence="1">GMP synthetase</fullName>
    </alternativeName>
    <alternativeName>
        <fullName evidence="1">Glutamine amidotransferase</fullName>
    </alternativeName>
</protein>
<evidence type="ECO:0000255" key="1">
    <source>
        <dbReference type="HAMAP-Rule" id="MF_00344"/>
    </source>
</evidence>
<comment type="function">
    <text evidence="1">Catalyzes the synthesis of GMP from XMP.</text>
</comment>
<comment type="catalytic activity">
    <reaction evidence="1">
        <text>XMP + L-glutamine + ATP + H2O = GMP + L-glutamate + AMP + diphosphate + 2 H(+)</text>
        <dbReference type="Rhea" id="RHEA:11680"/>
        <dbReference type="ChEBI" id="CHEBI:15377"/>
        <dbReference type="ChEBI" id="CHEBI:15378"/>
        <dbReference type="ChEBI" id="CHEBI:29985"/>
        <dbReference type="ChEBI" id="CHEBI:30616"/>
        <dbReference type="ChEBI" id="CHEBI:33019"/>
        <dbReference type="ChEBI" id="CHEBI:57464"/>
        <dbReference type="ChEBI" id="CHEBI:58115"/>
        <dbReference type="ChEBI" id="CHEBI:58359"/>
        <dbReference type="ChEBI" id="CHEBI:456215"/>
        <dbReference type="EC" id="6.3.5.2"/>
    </reaction>
</comment>
<comment type="pathway">
    <text evidence="1">Purine metabolism; GMP biosynthesis; GMP from XMP (L-Gln route): step 1/1.</text>
</comment>
<comment type="subunit">
    <text evidence="1">Homodimer.</text>
</comment>
<proteinExistence type="inferred from homology"/>
<reference key="1">
    <citation type="journal article" date="2006" name="Nat. Biotechnol.">
        <title>Complete genome of the mutualistic, N2-fixing grass endophyte Azoarcus sp. strain BH72.</title>
        <authorList>
            <person name="Krause A."/>
            <person name="Ramakumar A."/>
            <person name="Bartels D."/>
            <person name="Battistoni F."/>
            <person name="Bekel T."/>
            <person name="Boch J."/>
            <person name="Boehm M."/>
            <person name="Friedrich F."/>
            <person name="Hurek T."/>
            <person name="Krause L."/>
            <person name="Linke B."/>
            <person name="McHardy A.C."/>
            <person name="Sarkar A."/>
            <person name="Schneiker S."/>
            <person name="Syed A.A."/>
            <person name="Thauer R."/>
            <person name="Vorhoelter F.-J."/>
            <person name="Weidner S."/>
            <person name="Puehler A."/>
            <person name="Reinhold-Hurek B."/>
            <person name="Kaiser O."/>
            <person name="Goesmann A."/>
        </authorList>
    </citation>
    <scope>NUCLEOTIDE SEQUENCE [LARGE SCALE GENOMIC DNA]</scope>
    <source>
        <strain>BH72</strain>
    </source>
</reference>
<dbReference type="EC" id="6.3.5.2" evidence="1"/>
<dbReference type="EMBL" id="AM406670">
    <property type="protein sequence ID" value="CAL94198.1"/>
    <property type="molecule type" value="Genomic_DNA"/>
</dbReference>
<dbReference type="RefSeq" id="WP_011765314.1">
    <property type="nucleotide sequence ID" value="NC_008702.1"/>
</dbReference>
<dbReference type="SMR" id="A1K5U3"/>
<dbReference type="STRING" id="62928.azo1581"/>
<dbReference type="MEROPS" id="C26.A07"/>
<dbReference type="KEGG" id="azo:azo1581"/>
<dbReference type="eggNOG" id="COG0518">
    <property type="taxonomic scope" value="Bacteria"/>
</dbReference>
<dbReference type="eggNOG" id="COG0519">
    <property type="taxonomic scope" value="Bacteria"/>
</dbReference>
<dbReference type="HOGENOM" id="CLU_014340_0_5_4"/>
<dbReference type="UniPathway" id="UPA00189">
    <property type="reaction ID" value="UER00296"/>
</dbReference>
<dbReference type="Proteomes" id="UP000002588">
    <property type="component" value="Chromosome"/>
</dbReference>
<dbReference type="GO" id="GO:0005829">
    <property type="term" value="C:cytosol"/>
    <property type="evidence" value="ECO:0007669"/>
    <property type="project" value="TreeGrafter"/>
</dbReference>
<dbReference type="GO" id="GO:0005524">
    <property type="term" value="F:ATP binding"/>
    <property type="evidence" value="ECO:0007669"/>
    <property type="project" value="UniProtKB-UniRule"/>
</dbReference>
<dbReference type="GO" id="GO:0003921">
    <property type="term" value="F:GMP synthase activity"/>
    <property type="evidence" value="ECO:0007669"/>
    <property type="project" value="InterPro"/>
</dbReference>
<dbReference type="CDD" id="cd01742">
    <property type="entry name" value="GATase1_GMP_Synthase"/>
    <property type="match status" value="1"/>
</dbReference>
<dbReference type="CDD" id="cd01997">
    <property type="entry name" value="GMP_synthase_C"/>
    <property type="match status" value="1"/>
</dbReference>
<dbReference type="FunFam" id="3.30.300.10:FF:000002">
    <property type="entry name" value="GMP synthase [glutamine-hydrolyzing]"/>
    <property type="match status" value="1"/>
</dbReference>
<dbReference type="FunFam" id="3.40.50.620:FF:000001">
    <property type="entry name" value="GMP synthase [glutamine-hydrolyzing]"/>
    <property type="match status" value="1"/>
</dbReference>
<dbReference type="FunFam" id="3.40.50.880:FF:000001">
    <property type="entry name" value="GMP synthase [glutamine-hydrolyzing]"/>
    <property type="match status" value="1"/>
</dbReference>
<dbReference type="Gene3D" id="3.30.300.10">
    <property type="match status" value="1"/>
</dbReference>
<dbReference type="Gene3D" id="3.40.50.880">
    <property type="match status" value="1"/>
</dbReference>
<dbReference type="Gene3D" id="3.40.50.620">
    <property type="entry name" value="HUPs"/>
    <property type="match status" value="1"/>
</dbReference>
<dbReference type="HAMAP" id="MF_00344">
    <property type="entry name" value="GMP_synthase"/>
    <property type="match status" value="1"/>
</dbReference>
<dbReference type="InterPro" id="IPR029062">
    <property type="entry name" value="Class_I_gatase-like"/>
</dbReference>
<dbReference type="InterPro" id="IPR017926">
    <property type="entry name" value="GATASE"/>
</dbReference>
<dbReference type="InterPro" id="IPR001674">
    <property type="entry name" value="GMP_synth_C"/>
</dbReference>
<dbReference type="InterPro" id="IPR004739">
    <property type="entry name" value="GMP_synth_GATase"/>
</dbReference>
<dbReference type="InterPro" id="IPR022955">
    <property type="entry name" value="GMP_synthase"/>
</dbReference>
<dbReference type="InterPro" id="IPR025777">
    <property type="entry name" value="GMPS_ATP_PPase_dom"/>
</dbReference>
<dbReference type="InterPro" id="IPR022310">
    <property type="entry name" value="NAD/GMP_synthase"/>
</dbReference>
<dbReference type="InterPro" id="IPR014729">
    <property type="entry name" value="Rossmann-like_a/b/a_fold"/>
</dbReference>
<dbReference type="NCBIfam" id="TIGR00884">
    <property type="entry name" value="guaA_Cterm"/>
    <property type="match status" value="1"/>
</dbReference>
<dbReference type="NCBIfam" id="TIGR00888">
    <property type="entry name" value="guaA_Nterm"/>
    <property type="match status" value="1"/>
</dbReference>
<dbReference type="NCBIfam" id="NF000848">
    <property type="entry name" value="PRK00074.1"/>
    <property type="match status" value="1"/>
</dbReference>
<dbReference type="PANTHER" id="PTHR11922:SF2">
    <property type="entry name" value="GMP SYNTHASE [GLUTAMINE-HYDROLYZING]"/>
    <property type="match status" value="1"/>
</dbReference>
<dbReference type="PANTHER" id="PTHR11922">
    <property type="entry name" value="GMP SYNTHASE-RELATED"/>
    <property type="match status" value="1"/>
</dbReference>
<dbReference type="Pfam" id="PF00117">
    <property type="entry name" value="GATase"/>
    <property type="match status" value="1"/>
</dbReference>
<dbReference type="Pfam" id="PF00958">
    <property type="entry name" value="GMP_synt_C"/>
    <property type="match status" value="1"/>
</dbReference>
<dbReference type="Pfam" id="PF02540">
    <property type="entry name" value="NAD_synthase"/>
    <property type="match status" value="1"/>
</dbReference>
<dbReference type="PRINTS" id="PR00097">
    <property type="entry name" value="ANTSNTHASEII"/>
</dbReference>
<dbReference type="PRINTS" id="PR00099">
    <property type="entry name" value="CPSGATASE"/>
</dbReference>
<dbReference type="PRINTS" id="PR00096">
    <property type="entry name" value="GATASE"/>
</dbReference>
<dbReference type="SUPFAM" id="SSF52402">
    <property type="entry name" value="Adenine nucleotide alpha hydrolases-like"/>
    <property type="match status" value="1"/>
</dbReference>
<dbReference type="SUPFAM" id="SSF52317">
    <property type="entry name" value="Class I glutamine amidotransferase-like"/>
    <property type="match status" value="1"/>
</dbReference>
<dbReference type="SUPFAM" id="SSF54810">
    <property type="entry name" value="GMP synthetase C-terminal dimerisation domain"/>
    <property type="match status" value="1"/>
</dbReference>
<dbReference type="PROSITE" id="PS51273">
    <property type="entry name" value="GATASE_TYPE_1"/>
    <property type="match status" value="1"/>
</dbReference>
<dbReference type="PROSITE" id="PS51553">
    <property type="entry name" value="GMPS_ATP_PPASE"/>
    <property type="match status" value="1"/>
</dbReference>
<feature type="chain" id="PRO_1000120210" description="GMP synthase [glutamine-hydrolyzing]">
    <location>
        <begin position="1"/>
        <end position="521"/>
    </location>
</feature>
<feature type="domain" description="Glutamine amidotransferase type-1" evidence="1">
    <location>
        <begin position="5"/>
        <end position="203"/>
    </location>
</feature>
<feature type="domain" description="GMPS ATP-PPase" evidence="1">
    <location>
        <begin position="204"/>
        <end position="396"/>
    </location>
</feature>
<feature type="active site" description="Nucleophile" evidence="1">
    <location>
        <position position="82"/>
    </location>
</feature>
<feature type="active site" evidence="1">
    <location>
        <position position="177"/>
    </location>
</feature>
<feature type="active site" evidence="1">
    <location>
        <position position="179"/>
    </location>
</feature>
<feature type="binding site" evidence="1">
    <location>
        <begin position="231"/>
        <end position="237"/>
    </location>
    <ligand>
        <name>ATP</name>
        <dbReference type="ChEBI" id="CHEBI:30616"/>
    </ligand>
</feature>